<reference key="1">
    <citation type="journal article" date="2009" name="PLoS Genet.">
        <title>Organised genome dynamics in the Escherichia coli species results in highly diverse adaptive paths.</title>
        <authorList>
            <person name="Touchon M."/>
            <person name="Hoede C."/>
            <person name="Tenaillon O."/>
            <person name="Barbe V."/>
            <person name="Baeriswyl S."/>
            <person name="Bidet P."/>
            <person name="Bingen E."/>
            <person name="Bonacorsi S."/>
            <person name="Bouchier C."/>
            <person name="Bouvet O."/>
            <person name="Calteau A."/>
            <person name="Chiapello H."/>
            <person name="Clermont O."/>
            <person name="Cruveiller S."/>
            <person name="Danchin A."/>
            <person name="Diard M."/>
            <person name="Dossat C."/>
            <person name="Karoui M.E."/>
            <person name="Frapy E."/>
            <person name="Garry L."/>
            <person name="Ghigo J.M."/>
            <person name="Gilles A.M."/>
            <person name="Johnson J."/>
            <person name="Le Bouguenec C."/>
            <person name="Lescat M."/>
            <person name="Mangenot S."/>
            <person name="Martinez-Jehanne V."/>
            <person name="Matic I."/>
            <person name="Nassif X."/>
            <person name="Oztas S."/>
            <person name="Petit M.A."/>
            <person name="Pichon C."/>
            <person name="Rouy Z."/>
            <person name="Ruf C.S."/>
            <person name="Schneider D."/>
            <person name="Tourret J."/>
            <person name="Vacherie B."/>
            <person name="Vallenet D."/>
            <person name="Medigue C."/>
            <person name="Rocha E.P.C."/>
            <person name="Denamur E."/>
        </authorList>
    </citation>
    <scope>NUCLEOTIDE SEQUENCE [LARGE SCALE GENOMIC DNA]</scope>
    <source>
        <strain>IAI1</strain>
    </source>
</reference>
<gene>
    <name evidence="1" type="primary">lolB</name>
    <name type="ordered locus">ECIAI1_1230</name>
</gene>
<feature type="signal peptide" evidence="1">
    <location>
        <begin position="1"/>
        <end position="21"/>
    </location>
</feature>
<feature type="chain" id="PRO_1000190859" description="Outer-membrane lipoprotein LolB">
    <location>
        <begin position="22"/>
        <end position="207"/>
    </location>
</feature>
<feature type="lipid moiety-binding region" description="N-palmitoyl cysteine" evidence="1">
    <location>
        <position position="22"/>
    </location>
</feature>
<feature type="lipid moiety-binding region" description="S-diacylglycerol cysteine" evidence="1">
    <location>
        <position position="22"/>
    </location>
</feature>
<name>LOLB_ECO8A</name>
<proteinExistence type="inferred from homology"/>
<protein>
    <recommendedName>
        <fullName evidence="1">Outer-membrane lipoprotein LolB</fullName>
    </recommendedName>
</protein>
<sequence>MPLPDFRLIRLLPLAALVLTACSVTTPKGPGKSPDSPQWRQHQQDVRNLNQYQTRGAFAYISDQQKVYARFFWQQTGQDRYRLLLTNPLGSTELELNAQPGNVQLVDNKGQRYTADDAEEMIGKLTGMPIPLNSLRQWILGLPGDATDYKLDDQYRLSEITYSQNGKNWKVVYGGYDTKTQPAMPANMELTDGGQRIKLKMDNWIVK</sequence>
<evidence type="ECO:0000255" key="1">
    <source>
        <dbReference type="HAMAP-Rule" id="MF_00233"/>
    </source>
</evidence>
<organism>
    <name type="scientific">Escherichia coli O8 (strain IAI1)</name>
    <dbReference type="NCBI Taxonomy" id="585034"/>
    <lineage>
        <taxon>Bacteria</taxon>
        <taxon>Pseudomonadati</taxon>
        <taxon>Pseudomonadota</taxon>
        <taxon>Gammaproteobacteria</taxon>
        <taxon>Enterobacterales</taxon>
        <taxon>Enterobacteriaceae</taxon>
        <taxon>Escherichia</taxon>
    </lineage>
</organism>
<comment type="function">
    <text evidence="1">Plays a critical role in the incorporation of lipoproteins in the outer membrane after they are released by the LolA protein.</text>
</comment>
<comment type="subunit">
    <text evidence="1">Monomer.</text>
</comment>
<comment type="subcellular location">
    <subcellularLocation>
        <location evidence="1">Cell outer membrane</location>
        <topology evidence="1">Lipid-anchor</topology>
    </subcellularLocation>
</comment>
<comment type="similarity">
    <text evidence="1">Belongs to the LolB family.</text>
</comment>
<accession>B7LXC4</accession>
<dbReference type="EMBL" id="CU928160">
    <property type="protein sequence ID" value="CAQ98089.1"/>
    <property type="molecule type" value="Genomic_DNA"/>
</dbReference>
<dbReference type="RefSeq" id="WP_001130692.1">
    <property type="nucleotide sequence ID" value="NC_011741.1"/>
</dbReference>
<dbReference type="SMR" id="B7LXC4"/>
<dbReference type="GeneID" id="93775274"/>
<dbReference type="KEGG" id="ecr:ECIAI1_1230"/>
<dbReference type="HOGENOM" id="CLU_092816_1_1_6"/>
<dbReference type="GO" id="GO:0009279">
    <property type="term" value="C:cell outer membrane"/>
    <property type="evidence" value="ECO:0007669"/>
    <property type="project" value="UniProtKB-SubCell"/>
</dbReference>
<dbReference type="GO" id="GO:0044874">
    <property type="term" value="P:lipoprotein localization to outer membrane"/>
    <property type="evidence" value="ECO:0007669"/>
    <property type="project" value="UniProtKB-UniRule"/>
</dbReference>
<dbReference type="GO" id="GO:0015031">
    <property type="term" value="P:protein transport"/>
    <property type="evidence" value="ECO:0007669"/>
    <property type="project" value="UniProtKB-KW"/>
</dbReference>
<dbReference type="CDD" id="cd16326">
    <property type="entry name" value="LolB"/>
    <property type="match status" value="1"/>
</dbReference>
<dbReference type="FunFam" id="2.50.20.10:FF:000002">
    <property type="entry name" value="Outer-membrane lipoprotein LolB"/>
    <property type="match status" value="1"/>
</dbReference>
<dbReference type="Gene3D" id="2.50.20.10">
    <property type="entry name" value="Lipoprotein localisation LolA/LolB/LppX"/>
    <property type="match status" value="1"/>
</dbReference>
<dbReference type="HAMAP" id="MF_00233">
    <property type="entry name" value="LolB"/>
    <property type="match status" value="1"/>
</dbReference>
<dbReference type="InterPro" id="IPR029046">
    <property type="entry name" value="LolA/LolB/LppX"/>
</dbReference>
<dbReference type="InterPro" id="IPR004565">
    <property type="entry name" value="OM_lipoprot_LolB"/>
</dbReference>
<dbReference type="NCBIfam" id="TIGR00548">
    <property type="entry name" value="lolB"/>
    <property type="match status" value="1"/>
</dbReference>
<dbReference type="Pfam" id="PF03550">
    <property type="entry name" value="LolB"/>
    <property type="match status" value="1"/>
</dbReference>
<dbReference type="SUPFAM" id="SSF89392">
    <property type="entry name" value="Prokaryotic lipoproteins and lipoprotein localization factors"/>
    <property type="match status" value="1"/>
</dbReference>
<dbReference type="PROSITE" id="PS51257">
    <property type="entry name" value="PROKAR_LIPOPROTEIN"/>
    <property type="match status" value="1"/>
</dbReference>
<keyword id="KW-0998">Cell outer membrane</keyword>
<keyword id="KW-0143">Chaperone</keyword>
<keyword id="KW-0449">Lipoprotein</keyword>
<keyword id="KW-0472">Membrane</keyword>
<keyword id="KW-0564">Palmitate</keyword>
<keyword id="KW-0653">Protein transport</keyword>
<keyword id="KW-0732">Signal</keyword>
<keyword id="KW-0813">Transport</keyword>